<gene>
    <name type="primary">pgaI</name>
    <name type="synonym">pg1</name>
    <name type="synonym">pga1</name>
    <name type="ORF">An01g11520</name>
</gene>
<reference key="1">
    <citation type="journal article" date="2007" name="Nat. Biotechnol.">
        <title>Genome sequencing and analysis of the versatile cell factory Aspergillus niger CBS 513.88.</title>
        <authorList>
            <person name="Pel H.J."/>
            <person name="de Winde J.H."/>
            <person name="Archer D.B."/>
            <person name="Dyer P.S."/>
            <person name="Hofmann G."/>
            <person name="Schaap P.J."/>
            <person name="Turner G."/>
            <person name="de Vries R.P."/>
            <person name="Albang R."/>
            <person name="Albermann K."/>
            <person name="Andersen M.R."/>
            <person name="Bendtsen J.D."/>
            <person name="Benen J.A.E."/>
            <person name="van den Berg M."/>
            <person name="Breestraat S."/>
            <person name="Caddick M.X."/>
            <person name="Contreras R."/>
            <person name="Cornell M."/>
            <person name="Coutinho P.M."/>
            <person name="Danchin E.G.J."/>
            <person name="Debets A.J.M."/>
            <person name="Dekker P."/>
            <person name="van Dijck P.W.M."/>
            <person name="van Dijk A."/>
            <person name="Dijkhuizen L."/>
            <person name="Driessen A.J.M."/>
            <person name="d'Enfert C."/>
            <person name="Geysens S."/>
            <person name="Goosen C."/>
            <person name="Groot G.S.P."/>
            <person name="de Groot P.W.J."/>
            <person name="Guillemette T."/>
            <person name="Henrissat B."/>
            <person name="Herweijer M."/>
            <person name="van den Hombergh J.P.T.W."/>
            <person name="van den Hondel C.A.M.J.J."/>
            <person name="van der Heijden R.T.J.M."/>
            <person name="van der Kaaij R.M."/>
            <person name="Klis F.M."/>
            <person name="Kools H.J."/>
            <person name="Kubicek C.P."/>
            <person name="van Kuyk P.A."/>
            <person name="Lauber J."/>
            <person name="Lu X."/>
            <person name="van der Maarel M.J.E.C."/>
            <person name="Meulenberg R."/>
            <person name="Menke H."/>
            <person name="Mortimer M.A."/>
            <person name="Nielsen J."/>
            <person name="Oliver S.G."/>
            <person name="Olsthoorn M."/>
            <person name="Pal K."/>
            <person name="van Peij N.N.M.E."/>
            <person name="Ram A.F.J."/>
            <person name="Rinas U."/>
            <person name="Roubos J.A."/>
            <person name="Sagt C.M.J."/>
            <person name="Schmoll M."/>
            <person name="Sun J."/>
            <person name="Ussery D."/>
            <person name="Varga J."/>
            <person name="Vervecken W."/>
            <person name="van de Vondervoort P.J.J."/>
            <person name="Wedler H."/>
            <person name="Woesten H.A.B."/>
            <person name="Zeng A.-P."/>
            <person name="van Ooyen A.J.J."/>
            <person name="Visser J."/>
            <person name="Stam H."/>
        </authorList>
    </citation>
    <scope>NUCLEOTIDE SEQUENCE [LARGE SCALE GENOMIC DNA]</scope>
    <source>
        <strain>ATCC MYA-4892 / CBS 513.88 / FGSC A1513</strain>
    </source>
</reference>
<proteinExistence type="inferred from homology"/>
<feature type="signal peptide" evidence="2">
    <location>
        <begin position="1"/>
        <end position="18"/>
    </location>
</feature>
<feature type="propeptide" id="PRO_0000393621" evidence="2">
    <location>
        <begin position="19"/>
        <end position="31"/>
    </location>
</feature>
<feature type="chain" id="PRO_5000219447" description="Probable endopolygalacturonase I">
    <location>
        <begin position="32"/>
        <end position="368"/>
    </location>
</feature>
<feature type="repeat" description="PbH1 1">
    <location>
        <begin position="140"/>
        <end position="161"/>
    </location>
</feature>
<feature type="repeat" description="PbH1 2">
    <location>
        <begin position="162"/>
        <end position="192"/>
    </location>
</feature>
<feature type="repeat" description="PbH1 3">
    <location>
        <begin position="193"/>
        <end position="214"/>
    </location>
</feature>
<feature type="repeat" description="PbH1 4">
    <location>
        <begin position="244"/>
        <end position="265"/>
    </location>
</feature>
<feature type="repeat" description="PbH1 5">
    <location>
        <begin position="273"/>
        <end position="295"/>
    </location>
</feature>
<feature type="repeat" description="PbH1 6">
    <location>
        <begin position="307"/>
        <end position="352"/>
    </location>
</feature>
<feature type="active site" description="Proton donor" evidence="3">
    <location>
        <position position="207"/>
    </location>
</feature>
<feature type="active site" evidence="3">
    <location>
        <position position="229"/>
    </location>
</feature>
<feature type="glycosylation site" description="N-linked (GlcNAc...) asparagine" evidence="2">
    <location>
        <position position="246"/>
    </location>
</feature>
<feature type="disulfide bond" evidence="1">
    <location>
        <begin position="35"/>
        <end position="50"/>
    </location>
</feature>
<feature type="disulfide bond" evidence="1">
    <location>
        <begin position="209"/>
        <end position="225"/>
    </location>
</feature>
<feature type="disulfide bond" evidence="1">
    <location>
        <begin position="335"/>
        <end position="340"/>
    </location>
</feature>
<feature type="disulfide bond" evidence="1">
    <location>
        <begin position="359"/>
        <end position="368"/>
    </location>
</feature>
<comment type="function">
    <text evidence="1">Involved in maceration and soft-rotting of plant tissue. Hydrolyzes the 1,4-alpha glycosidic bonds of de-esterified pectate in the smooth region of the plant cell wall (By similarity).</text>
</comment>
<comment type="catalytic activity">
    <reaction>
        <text>(1,4-alpha-D-galacturonosyl)n+m + H2O = (1,4-alpha-D-galacturonosyl)n + (1,4-alpha-D-galacturonosyl)m.</text>
        <dbReference type="EC" id="3.2.1.15"/>
    </reaction>
</comment>
<comment type="subcellular location">
    <subcellularLocation>
        <location evidence="1">Secreted</location>
    </subcellularLocation>
</comment>
<comment type="similarity">
    <text evidence="4">Belongs to the glycosyl hydrolase 28 family.</text>
</comment>
<protein>
    <recommendedName>
        <fullName>Probable endopolygalacturonase I</fullName>
        <ecNumber>3.2.1.15</ecNumber>
    </recommendedName>
    <alternativeName>
        <fullName>Pectinase 1</fullName>
    </alternativeName>
    <alternativeName>
        <fullName>Polygalacturonase I</fullName>
        <shortName>PG-I</shortName>
    </alternativeName>
</protein>
<accession>A2QAH3</accession>
<evidence type="ECO:0000250" key="1"/>
<evidence type="ECO:0000255" key="2"/>
<evidence type="ECO:0000255" key="3">
    <source>
        <dbReference type="PROSITE-ProRule" id="PRU10052"/>
    </source>
</evidence>
<evidence type="ECO:0000305" key="4"/>
<name>PGLR1_ASPNC</name>
<keyword id="KW-0961">Cell wall biogenesis/degradation</keyword>
<keyword id="KW-1015">Disulfide bond</keyword>
<keyword id="KW-0325">Glycoprotein</keyword>
<keyword id="KW-0326">Glycosidase</keyword>
<keyword id="KW-0378">Hydrolase</keyword>
<keyword id="KW-1185">Reference proteome</keyword>
<keyword id="KW-0677">Repeat</keyword>
<keyword id="KW-0964">Secreted</keyword>
<keyword id="KW-0732">Signal</keyword>
<keyword id="KW-0865">Zymogen</keyword>
<dbReference type="EC" id="3.2.1.15"/>
<dbReference type="EMBL" id="AM269981">
    <property type="protein sequence ID" value="CAK44054.1"/>
    <property type="molecule type" value="Genomic_DNA"/>
</dbReference>
<dbReference type="RefSeq" id="XP_001389562.1">
    <property type="nucleotide sequence ID" value="XM_001389525.1"/>
</dbReference>
<dbReference type="SMR" id="A2QAH3"/>
<dbReference type="Allergome" id="8269">
    <property type="allergen name" value="Asp n Pectinase"/>
</dbReference>
<dbReference type="CAZy" id="GH28">
    <property type="family name" value="Glycoside Hydrolase Family 28"/>
</dbReference>
<dbReference type="GlyCosmos" id="A2QAH3">
    <property type="glycosylation" value="1 site, No reported glycans"/>
</dbReference>
<dbReference type="EnsemblFungi" id="CAK44054">
    <property type="protein sequence ID" value="CAK44054"/>
    <property type="gene ID" value="An01g11520"/>
</dbReference>
<dbReference type="GeneID" id="4978020"/>
<dbReference type="KEGG" id="ang:An01g11520"/>
<dbReference type="VEuPathDB" id="FungiDB:An01g11520"/>
<dbReference type="HOGENOM" id="CLU_040116_0_0_1"/>
<dbReference type="Proteomes" id="UP000006706">
    <property type="component" value="Chromosome 2R"/>
</dbReference>
<dbReference type="GO" id="GO:0005576">
    <property type="term" value="C:extracellular region"/>
    <property type="evidence" value="ECO:0000250"/>
    <property type="project" value="UniProtKB"/>
</dbReference>
<dbReference type="GO" id="GO:0047911">
    <property type="term" value="F:galacturan 1,4-alpha-galacturonidase activity"/>
    <property type="evidence" value="ECO:0000250"/>
    <property type="project" value="UniProtKB"/>
</dbReference>
<dbReference type="GO" id="GO:0004650">
    <property type="term" value="F:polygalacturonase activity"/>
    <property type="evidence" value="ECO:0000250"/>
    <property type="project" value="UniProtKB"/>
</dbReference>
<dbReference type="GO" id="GO:0071555">
    <property type="term" value="P:cell wall organization"/>
    <property type="evidence" value="ECO:0007669"/>
    <property type="project" value="UniProtKB-KW"/>
</dbReference>
<dbReference type="GO" id="GO:0045490">
    <property type="term" value="P:pectin catabolic process"/>
    <property type="evidence" value="ECO:0000250"/>
    <property type="project" value="UniProtKB"/>
</dbReference>
<dbReference type="FunFam" id="2.160.20.10:FF:000002">
    <property type="entry name" value="Endopolygalacturonase D"/>
    <property type="match status" value="1"/>
</dbReference>
<dbReference type="Gene3D" id="2.160.20.10">
    <property type="entry name" value="Single-stranded right-handed beta-helix, Pectin lyase-like"/>
    <property type="match status" value="1"/>
</dbReference>
<dbReference type="InterPro" id="IPR000743">
    <property type="entry name" value="Glyco_hydro_28"/>
</dbReference>
<dbReference type="InterPro" id="IPR050434">
    <property type="entry name" value="Glycosyl_hydrlase_28"/>
</dbReference>
<dbReference type="InterPro" id="IPR006626">
    <property type="entry name" value="PbH1"/>
</dbReference>
<dbReference type="InterPro" id="IPR012334">
    <property type="entry name" value="Pectin_lyas_fold"/>
</dbReference>
<dbReference type="InterPro" id="IPR011050">
    <property type="entry name" value="Pectin_lyase_fold/virulence"/>
</dbReference>
<dbReference type="PANTHER" id="PTHR31884:SF13">
    <property type="entry name" value="ENDOPOLYGALACTURONASE B"/>
    <property type="match status" value="1"/>
</dbReference>
<dbReference type="PANTHER" id="PTHR31884">
    <property type="entry name" value="POLYGALACTURONASE"/>
    <property type="match status" value="1"/>
</dbReference>
<dbReference type="Pfam" id="PF00295">
    <property type="entry name" value="Glyco_hydro_28"/>
    <property type="match status" value="1"/>
</dbReference>
<dbReference type="SMART" id="SM00710">
    <property type="entry name" value="PbH1"/>
    <property type="match status" value="6"/>
</dbReference>
<dbReference type="SUPFAM" id="SSF51126">
    <property type="entry name" value="Pectin lyase-like"/>
    <property type="match status" value="1"/>
</dbReference>
<dbReference type="PROSITE" id="PS00502">
    <property type="entry name" value="POLYGALACTURONASE"/>
    <property type="match status" value="1"/>
</dbReference>
<organism>
    <name type="scientific">Aspergillus niger (strain ATCC MYA-4892 / CBS 513.88 / FGSC A1513)</name>
    <dbReference type="NCBI Taxonomy" id="425011"/>
    <lineage>
        <taxon>Eukaryota</taxon>
        <taxon>Fungi</taxon>
        <taxon>Dikarya</taxon>
        <taxon>Ascomycota</taxon>
        <taxon>Pezizomycotina</taxon>
        <taxon>Eurotiomycetes</taxon>
        <taxon>Eurotiomycetidae</taxon>
        <taxon>Eurotiales</taxon>
        <taxon>Aspergillaceae</taxon>
        <taxon>Aspergillus</taxon>
        <taxon>Aspergillus subgen. Circumdati</taxon>
    </lineage>
</organism>
<sequence>MHSYQLLGLAAVGSLVSAAPAPSRVSEFAKKASTCTFTSASEASESISSCSDVVLSSIEVPAGETLDLSDAADGSTITFEGTTSFGYKEWKGPLIRFGGKDLTVTMADGAVIDGDGSRWWDSKGTNGGKTKPKFMYIHDVEDSTFKGINIKNTPVQAISVQATNVHLNDFTIDNSDGDDNGGHNTDGFDISESTGVYISGATVKNQDDCIAINSGESISFTGGTCSGGHGLSIGSVGGRDDNTVKNVTISDSTVSNSANGVRIKTIYKETGDVSEITYSNIQLSGITDYGIVIEQDYENGSPTGTPSTGIPITDVTVDGVTGTLEDDATQVYILCGDGSCSDWTWSGVDLSGGKTSDKCENVPSGASC</sequence>